<keyword id="KW-0238">DNA-binding</keyword>
<keyword id="KW-1017">Isopeptide bond</keyword>
<keyword id="KW-0539">Nucleus</keyword>
<keyword id="KW-0597">Phosphoprotein</keyword>
<keyword id="KW-1185">Reference proteome</keyword>
<keyword id="KW-0678">Repressor</keyword>
<keyword id="KW-0804">Transcription</keyword>
<keyword id="KW-0805">Transcription regulation</keyword>
<keyword id="KW-0832">Ubl conjugation</keyword>
<name>ATF3_BOVIN</name>
<evidence type="ECO:0000250" key="1">
    <source>
        <dbReference type="UniProtKB" id="P18847"/>
    </source>
</evidence>
<evidence type="ECO:0000250" key="2">
    <source>
        <dbReference type="UniProtKB" id="Q60765"/>
    </source>
</evidence>
<evidence type="ECO:0000255" key="3">
    <source>
        <dbReference type="PROSITE-ProRule" id="PRU00978"/>
    </source>
</evidence>
<evidence type="ECO:0000256" key="4">
    <source>
        <dbReference type="SAM" id="MobiDB-lite"/>
    </source>
</evidence>
<evidence type="ECO:0000305" key="5"/>
<protein>
    <recommendedName>
        <fullName>Cyclic AMP-dependent transcription factor ATF-3</fullName>
        <shortName>cAMP-dependent transcription factor ATF-3</shortName>
    </recommendedName>
    <alternativeName>
        <fullName>Activating transcription factor 3</fullName>
    </alternativeName>
</protein>
<proteinExistence type="evidence at transcript level"/>
<dbReference type="EMBL" id="BC112629">
    <property type="protein sequence ID" value="AAI12630.1"/>
    <property type="molecule type" value="mRNA"/>
</dbReference>
<dbReference type="RefSeq" id="NP_001039658.1">
    <property type="nucleotide sequence ID" value="NM_001046193.2"/>
</dbReference>
<dbReference type="RefSeq" id="XP_010811857.1">
    <property type="nucleotide sequence ID" value="XM_010813555.4"/>
</dbReference>
<dbReference type="RefSeq" id="XP_059731359.1">
    <property type="nucleotide sequence ID" value="XM_059875376.1"/>
</dbReference>
<dbReference type="SMR" id="Q2KII1"/>
<dbReference type="FunCoup" id="Q2KII1">
    <property type="interactions" value="187"/>
</dbReference>
<dbReference type="STRING" id="9913.ENSBTAP00000011265"/>
<dbReference type="PaxDb" id="9913-ENSBTAP00000011265"/>
<dbReference type="GeneID" id="515266"/>
<dbReference type="KEGG" id="bta:515266"/>
<dbReference type="CTD" id="467"/>
<dbReference type="eggNOG" id="KOG1414">
    <property type="taxonomic scope" value="Eukaryota"/>
</dbReference>
<dbReference type="HOGENOM" id="CLU_088612_0_2_1"/>
<dbReference type="InParanoid" id="Q2KII1"/>
<dbReference type="OrthoDB" id="2596881at2759"/>
<dbReference type="TreeFam" id="TF326301"/>
<dbReference type="Proteomes" id="UP000009136">
    <property type="component" value="Unplaced"/>
</dbReference>
<dbReference type="GO" id="GO:0005634">
    <property type="term" value="C:nucleus"/>
    <property type="evidence" value="ECO:0000318"/>
    <property type="project" value="GO_Central"/>
</dbReference>
<dbReference type="GO" id="GO:0000981">
    <property type="term" value="F:DNA-binding transcription factor activity, RNA polymerase II-specific"/>
    <property type="evidence" value="ECO:0000318"/>
    <property type="project" value="GO_Central"/>
</dbReference>
<dbReference type="GO" id="GO:0000978">
    <property type="term" value="F:RNA polymerase II cis-regulatory region sequence-specific DNA binding"/>
    <property type="evidence" value="ECO:0000318"/>
    <property type="project" value="GO_Central"/>
</dbReference>
<dbReference type="GO" id="GO:0006357">
    <property type="term" value="P:regulation of transcription by RNA polymerase II"/>
    <property type="evidence" value="ECO:0000318"/>
    <property type="project" value="GO_Central"/>
</dbReference>
<dbReference type="CDD" id="cd14722">
    <property type="entry name" value="bZIP_ATF3"/>
    <property type="match status" value="1"/>
</dbReference>
<dbReference type="FunFam" id="1.20.5.170:FF:000006">
    <property type="entry name" value="fos-related antigen 2 isoform X1"/>
    <property type="match status" value="1"/>
</dbReference>
<dbReference type="Gene3D" id="1.20.5.170">
    <property type="match status" value="1"/>
</dbReference>
<dbReference type="InterPro" id="IPR000837">
    <property type="entry name" value="AP-1"/>
</dbReference>
<dbReference type="InterPro" id="IPR004827">
    <property type="entry name" value="bZIP"/>
</dbReference>
<dbReference type="InterPro" id="IPR046347">
    <property type="entry name" value="bZIP_sf"/>
</dbReference>
<dbReference type="PANTHER" id="PTHR23351:SF23">
    <property type="entry name" value="CYCLIC AMP-DEPENDENT TRANSCRIPTION FACTOR ATF-3"/>
    <property type="match status" value="1"/>
</dbReference>
<dbReference type="PANTHER" id="PTHR23351">
    <property type="entry name" value="FOS TRANSCRIPTION FACTOR-RELATED"/>
    <property type="match status" value="1"/>
</dbReference>
<dbReference type="Pfam" id="PF00170">
    <property type="entry name" value="bZIP_1"/>
    <property type="match status" value="1"/>
</dbReference>
<dbReference type="PRINTS" id="PR00042">
    <property type="entry name" value="LEUZIPPRFOS"/>
</dbReference>
<dbReference type="SMART" id="SM00338">
    <property type="entry name" value="BRLZ"/>
    <property type="match status" value="1"/>
</dbReference>
<dbReference type="SUPFAM" id="SSF57959">
    <property type="entry name" value="Leucine zipper domain"/>
    <property type="match status" value="1"/>
</dbReference>
<dbReference type="PROSITE" id="PS50217">
    <property type="entry name" value="BZIP"/>
    <property type="match status" value="1"/>
</dbReference>
<dbReference type="PROSITE" id="PS00036">
    <property type="entry name" value="BZIP_BASIC"/>
    <property type="match status" value="1"/>
</dbReference>
<accession>Q2KII1</accession>
<sequence length="181" mass="20567">MMLQHPGQVSASEVSASAFVPCLSPPGSLVFEDFANLTPFVKEELRLAIQSKHLCHRMSSALDSVTVSGRPLEMSVTKAEVAPEEDERKKRRRERNKIAAAKCRNKKKEKTECLQKESEKLESVNAELKAQIEELKNEKQHLIYMLNLHRPTCIVRAQNGRTPEDERNLFIQQIKEGTLQS</sequence>
<organism>
    <name type="scientific">Bos taurus</name>
    <name type="common">Bovine</name>
    <dbReference type="NCBI Taxonomy" id="9913"/>
    <lineage>
        <taxon>Eukaryota</taxon>
        <taxon>Metazoa</taxon>
        <taxon>Chordata</taxon>
        <taxon>Craniata</taxon>
        <taxon>Vertebrata</taxon>
        <taxon>Euteleostomi</taxon>
        <taxon>Mammalia</taxon>
        <taxon>Eutheria</taxon>
        <taxon>Laurasiatheria</taxon>
        <taxon>Artiodactyla</taxon>
        <taxon>Ruminantia</taxon>
        <taxon>Pecora</taxon>
        <taxon>Bovidae</taxon>
        <taxon>Bovinae</taxon>
        <taxon>Bos</taxon>
    </lineage>
</organism>
<reference key="1">
    <citation type="submission" date="2006-01" db="EMBL/GenBank/DDBJ databases">
        <authorList>
            <consortium name="NIH - Mammalian Gene Collection (MGC) project"/>
        </authorList>
    </citation>
    <scope>NUCLEOTIDE SEQUENCE [LARGE SCALE MRNA]</scope>
    <source>
        <strain>Hereford</strain>
        <tissue>Testis</tissue>
    </source>
</reference>
<feature type="chain" id="PRO_0000285211" description="Cyclic AMP-dependent transcription factor ATF-3">
    <location>
        <begin position="1"/>
        <end position="181"/>
    </location>
</feature>
<feature type="domain" description="bZIP" evidence="3">
    <location>
        <begin position="86"/>
        <end position="149"/>
    </location>
</feature>
<feature type="region of interest" description="Disordered" evidence="4">
    <location>
        <begin position="76"/>
        <end position="97"/>
    </location>
</feature>
<feature type="region of interest" description="Basic motif" evidence="3">
    <location>
        <begin position="88"/>
        <end position="110"/>
    </location>
</feature>
<feature type="region of interest" description="Leucine-zipper" evidence="3">
    <location>
        <begin position="114"/>
        <end position="142"/>
    </location>
</feature>
<feature type="modified residue" description="Phosphothreonine" evidence="1">
    <location>
        <position position="162"/>
    </location>
</feature>
<feature type="cross-link" description="Glycyl lysine isopeptide (Lys-Gly) (interchain with G-Cter in SUMO2)" evidence="1">
    <location>
        <position position="78"/>
    </location>
</feature>
<feature type="cross-link" description="Glycyl lysine isopeptide (Lys-Gly) (interchain with G-Cter in SUMO2)" evidence="1">
    <location>
        <position position="175"/>
    </location>
</feature>
<gene>
    <name type="primary">ATF3</name>
</gene>
<comment type="function">
    <text evidence="1 2">This protein binds the cAMP response element (CRE) (consensus: 5'-GTGACGT[AC][AG]-3'), a sequence present in many viral and cellular promoters. Represses transcription from promoters with ATF sites (By similarity). It may repress transcription by stabilizing the binding of inhibitory cofactors at the promoter (By similarity).</text>
</comment>
<comment type="subunit">
    <text evidence="1">Binds DNA as a homodimer or a heterodimer. Interacts with KAT5; promoting KAT5 autoacetylation and KAT5 deubiquitination by USP7.</text>
</comment>
<comment type="subcellular location">
    <subcellularLocation>
        <location evidence="1 3">Nucleus</location>
    </subcellularLocation>
</comment>
<comment type="similarity">
    <text evidence="5">Belongs to the bZIP family. ATF subfamily.</text>
</comment>